<name>YCF15_HELAN</name>
<keyword id="KW-0150">Chloroplast</keyword>
<keyword id="KW-0934">Plastid</keyword>
<organism>
    <name type="scientific">Helianthus annuus</name>
    <name type="common">Common sunflower</name>
    <dbReference type="NCBI Taxonomy" id="4232"/>
    <lineage>
        <taxon>Eukaryota</taxon>
        <taxon>Viridiplantae</taxon>
        <taxon>Streptophyta</taxon>
        <taxon>Embryophyta</taxon>
        <taxon>Tracheophyta</taxon>
        <taxon>Spermatophyta</taxon>
        <taxon>Magnoliopsida</taxon>
        <taxon>eudicotyledons</taxon>
        <taxon>Gunneridae</taxon>
        <taxon>Pentapetalae</taxon>
        <taxon>asterids</taxon>
        <taxon>campanulids</taxon>
        <taxon>Asterales</taxon>
        <taxon>Asteraceae</taxon>
        <taxon>Asteroideae</taxon>
        <taxon>Heliantheae alliance</taxon>
        <taxon>Heliantheae</taxon>
        <taxon>Helianthus</taxon>
    </lineage>
</organism>
<sequence length="53" mass="5983">MRVQLHCIARIHVVYLKEVDLLASLTVQSSSRRAPFLLGPQRQNVGLPPTVHH</sequence>
<comment type="subcellular location">
    <subcellularLocation>
        <location>Plastid</location>
        <location>Chloroplast</location>
    </subcellularLocation>
</comment>
<comment type="similarity">
    <text evidence="1">Belongs to the ycf15 family.</text>
</comment>
<comment type="caution">
    <text evidence="1">Could be the product of a pseudogene.</text>
</comment>
<feature type="chain" id="PRO_0000359738" description="Putative uncharacterized protein ycf15">
    <location>
        <begin position="1"/>
        <end position="53"/>
    </location>
</feature>
<proteinExistence type="uncertain"/>
<dbReference type="EMBL" id="DQ383815">
    <property type="protein sequence ID" value="ABD47192.1"/>
    <property type="molecule type" value="Genomic_DNA"/>
</dbReference>
<dbReference type="EMBL" id="DQ383815">
    <property type="protein sequence ID" value="ABD47205.1"/>
    <property type="molecule type" value="Genomic_DNA"/>
</dbReference>
<dbReference type="SMR" id="Q1KXP9"/>
<dbReference type="GO" id="GO:0009507">
    <property type="term" value="C:chloroplast"/>
    <property type="evidence" value="ECO:0007669"/>
    <property type="project" value="UniProtKB-SubCell"/>
</dbReference>
<protein>
    <recommendedName>
        <fullName>Putative uncharacterized protein ycf15</fullName>
    </recommendedName>
</protein>
<reference key="1">
    <citation type="submission" date="2006-01" db="EMBL/GenBank/DDBJ databases">
        <title>A comparison of the first two published chloroplast genomes in Asteraceae: Lactuca and Helianthus.</title>
        <authorList>
            <person name="Timme R.E."/>
            <person name="Kuehl J.V."/>
            <person name="Boore J.L."/>
            <person name="Jansen R.K."/>
        </authorList>
    </citation>
    <scope>NUCLEOTIDE SEQUENCE [LARGE SCALE GENOMIC DNA]</scope>
    <source>
        <strain>cv. HA383</strain>
    </source>
</reference>
<geneLocation type="chloroplast"/>
<evidence type="ECO:0000305" key="1"/>
<accession>Q1KXP9</accession>
<gene>
    <name type="primary">ycf15-A</name>
</gene>
<gene>
    <name type="primary">ycf15-B</name>
</gene>